<protein>
    <recommendedName>
        <fullName evidence="1">Ureidoglycolate lyase</fullName>
        <ecNumber evidence="1">4.3.2.3</ecNumber>
    </recommendedName>
    <alternativeName>
        <fullName evidence="1">Ureidoglycolatase</fullName>
    </alternativeName>
</protein>
<gene>
    <name evidence="1" type="primary">allA</name>
    <name type="ordered locus">SF0444</name>
    <name type="ordered locus">S0451</name>
</gene>
<feature type="chain" id="PRO_0000120559" description="Ureidoglycolate lyase">
    <location>
        <begin position="1"/>
        <end position="160"/>
    </location>
</feature>
<feature type="strand" evidence="3">
    <location>
        <begin position="2"/>
        <end position="7"/>
    </location>
</feature>
<feature type="helix" evidence="3">
    <location>
        <begin position="10"/>
        <end position="13"/>
    </location>
</feature>
<feature type="turn" evidence="3">
    <location>
        <begin position="14"/>
        <end position="16"/>
    </location>
</feature>
<feature type="strand" evidence="3">
    <location>
        <begin position="17"/>
        <end position="20"/>
    </location>
</feature>
<feature type="strand" evidence="3">
    <location>
        <begin position="28"/>
        <end position="30"/>
    </location>
</feature>
<feature type="turn" evidence="3">
    <location>
        <begin position="31"/>
        <end position="34"/>
    </location>
</feature>
<feature type="strand" evidence="3">
    <location>
        <begin position="35"/>
        <end position="38"/>
    </location>
</feature>
<feature type="strand" evidence="3">
    <location>
        <begin position="46"/>
        <end position="48"/>
    </location>
</feature>
<feature type="strand" evidence="3">
    <location>
        <begin position="53"/>
        <end position="59"/>
    </location>
</feature>
<feature type="strand" evidence="3">
    <location>
        <begin position="70"/>
        <end position="73"/>
    </location>
</feature>
<feature type="strand" evidence="3">
    <location>
        <begin position="79"/>
        <end position="85"/>
    </location>
</feature>
<feature type="strand" evidence="3">
    <location>
        <begin position="90"/>
        <end position="94"/>
    </location>
</feature>
<feature type="strand" evidence="3">
    <location>
        <begin position="97"/>
        <end position="99"/>
    </location>
</feature>
<feature type="helix" evidence="3">
    <location>
        <begin position="102"/>
        <end position="104"/>
    </location>
</feature>
<feature type="strand" evidence="3">
    <location>
        <begin position="106"/>
        <end position="109"/>
    </location>
</feature>
<feature type="strand" evidence="3">
    <location>
        <begin position="115"/>
        <end position="118"/>
    </location>
</feature>
<feature type="strand" evidence="3">
    <location>
        <begin position="129"/>
        <end position="132"/>
    </location>
</feature>
<feature type="strand" evidence="3">
    <location>
        <begin position="134"/>
        <end position="140"/>
    </location>
</feature>
<feature type="strand" evidence="3">
    <location>
        <begin position="148"/>
        <end position="151"/>
    </location>
</feature>
<feature type="strand" evidence="3">
    <location>
        <begin position="156"/>
        <end position="158"/>
    </location>
</feature>
<keyword id="KW-0002">3D-structure</keyword>
<keyword id="KW-0456">Lyase</keyword>
<keyword id="KW-0659">Purine metabolism</keyword>
<keyword id="KW-1185">Reference proteome</keyword>
<accession>P63487</accession>
<accession>Q8XCX8</accession>
<comment type="function">
    <text evidence="1">Catalyzes the catabolism of the allantoin degradation intermediate (S)-ureidoglycolate, generating urea and glyoxylate. Involved in the anaerobic utilization of allantoin as sole nitrogen source. Reinforces the induction of genes involved in the degradation of allantoin and glyoxylate by producing glyoxylate.</text>
</comment>
<comment type="catalytic activity">
    <reaction evidence="1">
        <text>(S)-ureidoglycolate = urea + glyoxylate</text>
        <dbReference type="Rhea" id="RHEA:11304"/>
        <dbReference type="ChEBI" id="CHEBI:16199"/>
        <dbReference type="ChEBI" id="CHEBI:36655"/>
        <dbReference type="ChEBI" id="CHEBI:57296"/>
        <dbReference type="EC" id="4.3.2.3"/>
    </reaction>
</comment>
<comment type="cofactor">
    <cofactor evidence="1">
        <name>Ni(2+)</name>
        <dbReference type="ChEBI" id="CHEBI:49786"/>
    </cofactor>
</comment>
<comment type="pathway">
    <text evidence="1">Nitrogen metabolism; (S)-allantoin degradation.</text>
</comment>
<comment type="subunit">
    <text evidence="1 2">Homodimer.</text>
</comment>
<comment type="similarity">
    <text evidence="1">Belongs to the ureidoglycolate lyase family.</text>
</comment>
<proteinExistence type="evidence at protein level"/>
<evidence type="ECO:0000255" key="1">
    <source>
        <dbReference type="HAMAP-Rule" id="MF_00616"/>
    </source>
</evidence>
<evidence type="ECO:0000269" key="2">
    <source ref="3"/>
</evidence>
<evidence type="ECO:0007829" key="3">
    <source>
        <dbReference type="PDB" id="1XSR"/>
    </source>
</evidence>
<sequence length="160" mass="18223">MKLQVLPLSQEAFSAYGDVIETQQRDFFHINNGLVERYHDLALVEILEQDRTLISINRAQPANLPLTIHELERHPLGTQAFIPMKGEVFVVVVALGDDKPDLSTLRAFITNGEQGVNYHRNVWHHPLFAWQRVTDFLTIDRGGSDNCDVESIPEQELCFA</sequence>
<dbReference type="EC" id="4.3.2.3" evidence="1"/>
<dbReference type="EMBL" id="AE005674">
    <property type="protein sequence ID" value="AAN42098.1"/>
    <property type="molecule type" value="Genomic_DNA"/>
</dbReference>
<dbReference type="EMBL" id="AE014073">
    <property type="protein sequence ID" value="AAP15974.1"/>
    <property type="molecule type" value="Genomic_DNA"/>
</dbReference>
<dbReference type="RefSeq" id="WP_000776388.1">
    <property type="nucleotide sequence ID" value="NZ_WHSI01000019.1"/>
</dbReference>
<dbReference type="PDB" id="1XSR">
    <property type="method" value="X-ray"/>
    <property type="resolution" value="2.80 A"/>
    <property type="chains" value="A/B=1-160"/>
</dbReference>
<dbReference type="PDBsum" id="1XSR"/>
<dbReference type="SMR" id="P63487"/>
<dbReference type="STRING" id="198214.SF0444"/>
<dbReference type="PaxDb" id="198214-SF0444"/>
<dbReference type="GeneID" id="75202348"/>
<dbReference type="KEGG" id="sfl:SF0444"/>
<dbReference type="KEGG" id="sfx:S0451"/>
<dbReference type="PATRIC" id="fig|198214.7.peg.509"/>
<dbReference type="HOGENOM" id="CLU_070848_1_1_6"/>
<dbReference type="UniPathway" id="UPA00395"/>
<dbReference type="EvolutionaryTrace" id="P63487"/>
<dbReference type="Proteomes" id="UP000001006">
    <property type="component" value="Chromosome"/>
</dbReference>
<dbReference type="Proteomes" id="UP000002673">
    <property type="component" value="Chromosome"/>
</dbReference>
<dbReference type="GO" id="GO:0004848">
    <property type="term" value="F:ureidoglycolate hydrolase activity"/>
    <property type="evidence" value="ECO:0007669"/>
    <property type="project" value="InterPro"/>
</dbReference>
<dbReference type="GO" id="GO:0050385">
    <property type="term" value="F:ureidoglycolate lyase activity"/>
    <property type="evidence" value="ECO:0007669"/>
    <property type="project" value="UniProtKB-UniRule"/>
</dbReference>
<dbReference type="GO" id="GO:0000256">
    <property type="term" value="P:allantoin catabolic process"/>
    <property type="evidence" value="ECO:0007669"/>
    <property type="project" value="UniProtKB-UniRule"/>
</dbReference>
<dbReference type="GO" id="GO:0006145">
    <property type="term" value="P:purine nucleobase catabolic process"/>
    <property type="evidence" value="ECO:0007669"/>
    <property type="project" value="UniProtKB-UniRule"/>
</dbReference>
<dbReference type="CDD" id="cd20298">
    <property type="entry name" value="cupin_UAH"/>
    <property type="match status" value="1"/>
</dbReference>
<dbReference type="FunFam" id="2.60.120.480:FF:000001">
    <property type="entry name" value="Ureidoglycolate lyase"/>
    <property type="match status" value="1"/>
</dbReference>
<dbReference type="Gene3D" id="2.60.120.480">
    <property type="entry name" value="Ureidoglycolate hydrolase"/>
    <property type="match status" value="1"/>
</dbReference>
<dbReference type="HAMAP" id="MF_00616">
    <property type="entry name" value="Ureidogly_lyase"/>
    <property type="match status" value="1"/>
</dbReference>
<dbReference type="InterPro" id="IPR011051">
    <property type="entry name" value="RmlC_Cupin_sf"/>
</dbReference>
<dbReference type="InterPro" id="IPR047233">
    <property type="entry name" value="UAH_cupin"/>
</dbReference>
<dbReference type="InterPro" id="IPR007247">
    <property type="entry name" value="Ureidogly_lyase"/>
</dbReference>
<dbReference type="InterPro" id="IPR023525">
    <property type="entry name" value="Ureidogly_lyase_bac"/>
</dbReference>
<dbReference type="InterPro" id="IPR024060">
    <property type="entry name" value="Ureidoglycolate_lyase_dom_sf"/>
</dbReference>
<dbReference type="NCBIfam" id="NF002948">
    <property type="entry name" value="PRK03606.1-1"/>
    <property type="match status" value="1"/>
</dbReference>
<dbReference type="NCBIfam" id="NF009932">
    <property type="entry name" value="PRK13395.1"/>
    <property type="match status" value="1"/>
</dbReference>
<dbReference type="PANTHER" id="PTHR21221">
    <property type="entry name" value="UREIDOGLYCOLATE HYDROLASE"/>
    <property type="match status" value="1"/>
</dbReference>
<dbReference type="PANTHER" id="PTHR21221:SF1">
    <property type="entry name" value="UREIDOGLYCOLATE LYASE"/>
    <property type="match status" value="1"/>
</dbReference>
<dbReference type="Pfam" id="PF04115">
    <property type="entry name" value="Ureidogly_lyase"/>
    <property type="match status" value="1"/>
</dbReference>
<dbReference type="PIRSF" id="PIRSF017306">
    <property type="entry name" value="Ureidogly_hydro"/>
    <property type="match status" value="1"/>
</dbReference>
<dbReference type="SUPFAM" id="SSF51182">
    <property type="entry name" value="RmlC-like cupins"/>
    <property type="match status" value="1"/>
</dbReference>
<reference key="1">
    <citation type="journal article" date="2002" name="Nucleic Acids Res.">
        <title>Genome sequence of Shigella flexneri 2a: insights into pathogenicity through comparison with genomes of Escherichia coli K12 and O157.</title>
        <authorList>
            <person name="Jin Q."/>
            <person name="Yuan Z."/>
            <person name="Xu J."/>
            <person name="Wang Y."/>
            <person name="Shen Y."/>
            <person name="Lu W."/>
            <person name="Wang J."/>
            <person name="Liu H."/>
            <person name="Yang J."/>
            <person name="Yang F."/>
            <person name="Zhang X."/>
            <person name="Zhang J."/>
            <person name="Yang G."/>
            <person name="Wu H."/>
            <person name="Qu D."/>
            <person name="Dong J."/>
            <person name="Sun L."/>
            <person name="Xue Y."/>
            <person name="Zhao A."/>
            <person name="Gao Y."/>
            <person name="Zhu J."/>
            <person name="Kan B."/>
            <person name="Ding K."/>
            <person name="Chen S."/>
            <person name="Cheng H."/>
            <person name="Yao Z."/>
            <person name="He B."/>
            <person name="Chen R."/>
            <person name="Ma D."/>
            <person name="Qiang B."/>
            <person name="Wen Y."/>
            <person name="Hou Y."/>
            <person name="Yu J."/>
        </authorList>
    </citation>
    <scope>NUCLEOTIDE SEQUENCE [LARGE SCALE GENOMIC DNA]</scope>
    <source>
        <strain>301 / Serotype 2a</strain>
    </source>
</reference>
<reference key="2">
    <citation type="journal article" date="2003" name="Infect. Immun.">
        <title>Complete genome sequence and comparative genomics of Shigella flexneri serotype 2a strain 2457T.</title>
        <authorList>
            <person name="Wei J."/>
            <person name="Goldberg M.B."/>
            <person name="Burland V."/>
            <person name="Venkatesan M.M."/>
            <person name="Deng W."/>
            <person name="Fournier G."/>
            <person name="Mayhew G.F."/>
            <person name="Plunkett G. III"/>
            <person name="Rose D.J."/>
            <person name="Darling A."/>
            <person name="Mau B."/>
            <person name="Perna N.T."/>
            <person name="Payne S.M."/>
            <person name="Runyen-Janecky L.J."/>
            <person name="Zhou S."/>
            <person name="Schwartz D.C."/>
            <person name="Blattner F.R."/>
        </authorList>
    </citation>
    <scope>NUCLEOTIDE SEQUENCE [LARGE SCALE GENOMIC DNA]</scope>
    <source>
        <strain>ATCC 700930 / 2457T / Serotype 2a</strain>
    </source>
</reference>
<reference key="3">
    <citation type="submission" date="2005-01" db="PDB data bank">
        <title>X-ray structure of Northeast structural genomics consortium target Sfr7.</title>
        <authorList>
            <consortium name="Northeast structural genomics consortium (NESG)"/>
        </authorList>
    </citation>
    <scope>X-RAY CRYSTALLOGRAPHY (2.8 ANGSTROMS)</scope>
    <scope>SUBUNIT</scope>
</reference>
<organism>
    <name type="scientific">Shigella flexneri</name>
    <dbReference type="NCBI Taxonomy" id="623"/>
    <lineage>
        <taxon>Bacteria</taxon>
        <taxon>Pseudomonadati</taxon>
        <taxon>Pseudomonadota</taxon>
        <taxon>Gammaproteobacteria</taxon>
        <taxon>Enterobacterales</taxon>
        <taxon>Enterobacteriaceae</taxon>
        <taxon>Shigella</taxon>
    </lineage>
</organism>
<name>ALLA_SHIFL</name>